<comment type="function">
    <text>HMWC (high-molecular-weight cytochrome c), ORF2, ORF3, ORF4, ORF5 and ORF6 in the HMC operon form a transmembrane protein complex that allows electron flow from the periplasmic hydrogenase to the cytoplasmic enzymes that catalyze reduction of sulfates.</text>
</comment>
<comment type="subcellular location">
    <subcellularLocation>
        <location>Cell membrane</location>
        <topology>Multi-pass membrane protein</topology>
    </subcellularLocation>
</comment>
<comment type="similarity">
    <text evidence="2">Belongs to the NrfD family.</text>
</comment>
<protein>
    <recommendedName>
        <fullName>Protein DVU_0534</fullName>
    </recommendedName>
    <alternativeName>
        <fullName>HMC operon ORF 3</fullName>
    </alternativeName>
</protein>
<name>HMC3_NITV2</name>
<sequence>MQHANTNKSLMTPGNIITGIILVMGLVLTVLRFTKGIGAVSNLDDNNPWGIWIGFDLLCGVALAAGGYVTSASCYLFGMKRYHSAVRPAITTAFLGYFFVVVALNYDLGHPLRLPYPLVYSQGTTSLLFEVGLCVATYLTVLFVEWSPAALEWLGLRKIRNVVVKLTLVLTIFGVVLSTLHQSSLGALFLIAPSKLHPLWYSSFLPVFFFISSMVAGLSMVIFEGSLAHKGMHHMMDETHLKEADGVVFGFGKAASFVLAGYFMIKVIDVTMDNDWHYLATGYGAWWLVEMLGFVALPSFLYALGVREKRIGVIRFASVLGVLGIVMNRFNVCLVAFNWQLPADQRYFPHWMEIGISVFIVTSIITVYRFIASRMPVLYEHPDYKDAH</sequence>
<feature type="chain" id="PRO_0000159325" description="Protein DVU_0534">
    <location>
        <begin position="1"/>
        <end position="388"/>
    </location>
</feature>
<feature type="transmembrane region" description="Helical" evidence="1">
    <location>
        <begin position="10"/>
        <end position="31"/>
    </location>
</feature>
<feature type="transmembrane region" description="Helical" evidence="1">
    <location>
        <begin position="57"/>
        <end position="78"/>
    </location>
</feature>
<feature type="transmembrane region" description="Helical" evidence="1">
    <location>
        <begin position="89"/>
        <end position="106"/>
    </location>
</feature>
<feature type="transmembrane region" description="Helical" evidence="1">
    <location>
        <begin position="130"/>
        <end position="144"/>
    </location>
</feature>
<feature type="transmembrane region" description="Helical" evidence="1">
    <location>
        <begin position="166"/>
        <end position="191"/>
    </location>
</feature>
<feature type="transmembrane region" description="Helical" evidence="1">
    <location>
        <begin position="199"/>
        <end position="222"/>
    </location>
</feature>
<feature type="transmembrane region" description="Helical" evidence="1">
    <location>
        <begin position="254"/>
        <end position="265"/>
    </location>
</feature>
<feature type="transmembrane region" description="Helical" evidence="1">
    <location>
        <begin position="291"/>
        <end position="306"/>
    </location>
</feature>
<feature type="transmembrane region" description="Helical" evidence="1">
    <location>
        <begin position="316"/>
        <end position="328"/>
    </location>
</feature>
<feature type="transmembrane region" description="Helical" evidence="1">
    <location>
        <begin position="354"/>
        <end position="368"/>
    </location>
</feature>
<accession>P33390</accession>
<gene>
    <name type="ordered locus">DVU_0534</name>
</gene>
<keyword id="KW-1003">Cell membrane</keyword>
<keyword id="KW-0472">Membrane</keyword>
<keyword id="KW-1185">Reference proteome</keyword>
<keyword id="KW-0812">Transmembrane</keyword>
<keyword id="KW-1133">Transmembrane helix</keyword>
<evidence type="ECO:0000255" key="1"/>
<evidence type="ECO:0000305" key="2"/>
<dbReference type="EMBL" id="L16784">
    <property type="protein sequence ID" value="AAA71996.1"/>
    <property type="molecule type" value="Unassigned_DNA"/>
</dbReference>
<dbReference type="EMBL" id="AE017285">
    <property type="protein sequence ID" value="AAS95016.1"/>
    <property type="molecule type" value="Genomic_DNA"/>
</dbReference>
<dbReference type="PIR" id="C40605">
    <property type="entry name" value="C40605"/>
</dbReference>
<dbReference type="RefSeq" id="WP_010937840.1">
    <property type="nucleotide sequence ID" value="NC_002937.3"/>
</dbReference>
<dbReference type="RefSeq" id="YP_009757.1">
    <property type="nucleotide sequence ID" value="NC_002937.3"/>
</dbReference>
<dbReference type="SMR" id="P33390"/>
<dbReference type="STRING" id="882.DVU_0534"/>
<dbReference type="PaxDb" id="882-DVU_0534"/>
<dbReference type="EnsemblBacteria" id="AAS95016">
    <property type="protein sequence ID" value="AAS95016"/>
    <property type="gene ID" value="DVU_0534"/>
</dbReference>
<dbReference type="KEGG" id="dvu:DVU_0534"/>
<dbReference type="PATRIC" id="fig|882.5.peg.510"/>
<dbReference type="eggNOG" id="COG5557">
    <property type="taxonomic scope" value="Bacteria"/>
</dbReference>
<dbReference type="HOGENOM" id="CLU_049007_0_0_7"/>
<dbReference type="OrthoDB" id="9768158at2"/>
<dbReference type="PhylomeDB" id="P33390"/>
<dbReference type="BioCyc" id="MetaCyc:MONOMER-22164"/>
<dbReference type="Proteomes" id="UP000002194">
    <property type="component" value="Chromosome"/>
</dbReference>
<dbReference type="GO" id="GO:0005886">
    <property type="term" value="C:plasma membrane"/>
    <property type="evidence" value="ECO:0007669"/>
    <property type="project" value="UniProtKB-SubCell"/>
</dbReference>
<dbReference type="GO" id="GO:0009061">
    <property type="term" value="P:anaerobic respiration"/>
    <property type="evidence" value="ECO:0007669"/>
    <property type="project" value="TreeGrafter"/>
</dbReference>
<dbReference type="InterPro" id="IPR051817">
    <property type="entry name" value="FDH_cytochrome_b556_subunit"/>
</dbReference>
<dbReference type="InterPro" id="IPR005614">
    <property type="entry name" value="NrfD-like"/>
</dbReference>
<dbReference type="InterPro" id="IPR054900">
    <property type="entry name" value="sulf_resp_HmcC"/>
</dbReference>
<dbReference type="NCBIfam" id="NF045714">
    <property type="entry name" value="sulf_resp_HmcC"/>
    <property type="match status" value="1"/>
</dbReference>
<dbReference type="PANTHER" id="PTHR30074">
    <property type="entry name" value="FORMATE DEHYDROGENASE, NITRATE-INDUCIBLE, CYTOCHROME B556 FDN SUBUNIT"/>
    <property type="match status" value="1"/>
</dbReference>
<dbReference type="PANTHER" id="PTHR30074:SF4">
    <property type="entry name" value="NI_FE-HYDROGENASE 2 B-TYPE CYTOCHROME SUBUNIT-RELATED"/>
    <property type="match status" value="1"/>
</dbReference>
<dbReference type="Pfam" id="PF03916">
    <property type="entry name" value="NrfD"/>
    <property type="match status" value="1"/>
</dbReference>
<proteinExistence type="inferred from homology"/>
<organism>
    <name type="scientific">Nitratidesulfovibrio vulgaris (strain ATCC 29579 / DSM 644 / CCUG 34227 / NCIMB 8303 / VKM B-1760 / Hildenborough)</name>
    <name type="common">Desulfovibrio vulgaris</name>
    <dbReference type="NCBI Taxonomy" id="882"/>
    <lineage>
        <taxon>Bacteria</taxon>
        <taxon>Pseudomonadati</taxon>
        <taxon>Thermodesulfobacteriota</taxon>
        <taxon>Desulfovibrionia</taxon>
        <taxon>Desulfovibrionales</taxon>
        <taxon>Desulfovibrionaceae</taxon>
        <taxon>Nitratidesulfovibrio</taxon>
    </lineage>
</organism>
<reference key="1">
    <citation type="journal article" date="1993" name="J. Bacteriol.">
        <title>The hmc operon of Desulfovibrio vulgaris subsp. vulgaris Hildenborough encodes a potential transmembrane redox protein complex.</title>
        <authorList>
            <person name="Rossi M."/>
            <person name="Pollock W.B.R."/>
            <person name="Reij M.W."/>
            <person name="Keon R.G."/>
            <person name="Fu R."/>
            <person name="Voordouw G."/>
        </authorList>
    </citation>
    <scope>NUCLEOTIDE SEQUENCE [GENOMIC DNA]</scope>
</reference>
<reference key="2">
    <citation type="journal article" date="2004" name="Nat. Biotechnol.">
        <title>The genome sequence of the anaerobic, sulfate-reducing bacterium Desulfovibrio vulgaris Hildenborough.</title>
        <authorList>
            <person name="Heidelberg J.F."/>
            <person name="Seshadri R."/>
            <person name="Haveman S.A."/>
            <person name="Hemme C.L."/>
            <person name="Paulsen I.T."/>
            <person name="Kolonay J.F."/>
            <person name="Eisen J.A."/>
            <person name="Ward N.L."/>
            <person name="Methe B.A."/>
            <person name="Brinkac L.M."/>
            <person name="Daugherty S.C."/>
            <person name="DeBoy R.T."/>
            <person name="Dodson R.J."/>
            <person name="Durkin A.S."/>
            <person name="Madupu R."/>
            <person name="Nelson W.C."/>
            <person name="Sullivan S.A."/>
            <person name="Fouts D.E."/>
            <person name="Haft D.H."/>
            <person name="Selengut J."/>
            <person name="Peterson J.D."/>
            <person name="Davidsen T.M."/>
            <person name="Zafar N."/>
            <person name="Zhou L."/>
            <person name="Radune D."/>
            <person name="Dimitrov G."/>
            <person name="Hance M."/>
            <person name="Tran K."/>
            <person name="Khouri H.M."/>
            <person name="Gill J."/>
            <person name="Utterback T.R."/>
            <person name="Feldblyum T.V."/>
            <person name="Wall J.D."/>
            <person name="Voordouw G."/>
            <person name="Fraser C.M."/>
        </authorList>
    </citation>
    <scope>NUCLEOTIDE SEQUENCE [LARGE SCALE GENOMIC DNA]</scope>
    <source>
        <strain>ATCC 29579 / DSM 644 / CCUG 34227 / NCIMB 8303 / VKM B-1760 / Hildenborough</strain>
    </source>
</reference>